<keyword id="KW-1015">Disulfide bond</keyword>
<keyword id="KW-0325">Glycoprotein</keyword>
<keyword id="KW-0328">Glycosyltransferase</keyword>
<keyword id="KW-0333">Golgi apparatus</keyword>
<keyword id="KW-0443">Lipid metabolism</keyword>
<keyword id="KW-0472">Membrane</keyword>
<keyword id="KW-1185">Reference proteome</keyword>
<keyword id="KW-0730">Sialic acid</keyword>
<keyword id="KW-0735">Signal-anchor</keyword>
<keyword id="KW-0808">Transferase</keyword>
<keyword id="KW-0812">Transmembrane</keyword>
<keyword id="KW-1133">Transmembrane helix</keyword>
<organism>
    <name type="scientific">Mus musculus</name>
    <name type="common">Mouse</name>
    <dbReference type="NCBI Taxonomy" id="10090"/>
    <lineage>
        <taxon>Eukaryota</taxon>
        <taxon>Metazoa</taxon>
        <taxon>Chordata</taxon>
        <taxon>Craniata</taxon>
        <taxon>Vertebrata</taxon>
        <taxon>Euteleostomi</taxon>
        <taxon>Mammalia</taxon>
        <taxon>Eutheria</taxon>
        <taxon>Euarchontoglires</taxon>
        <taxon>Glires</taxon>
        <taxon>Rodentia</taxon>
        <taxon>Myomorpha</taxon>
        <taxon>Muroidea</taxon>
        <taxon>Muridae</taxon>
        <taxon>Murinae</taxon>
        <taxon>Mus</taxon>
        <taxon>Mus</taxon>
    </lineage>
</organism>
<evidence type="ECO:0000250" key="1"/>
<evidence type="ECO:0000250" key="2">
    <source>
        <dbReference type="UniProtKB" id="Q9BVH7"/>
    </source>
</evidence>
<evidence type="ECO:0000255" key="3"/>
<evidence type="ECO:0000256" key="4">
    <source>
        <dbReference type="SAM" id="MobiDB-lite"/>
    </source>
</evidence>
<evidence type="ECO:0000269" key="5">
    <source>
    </source>
</evidence>
<evidence type="ECO:0000269" key="6">
    <source>
    </source>
</evidence>
<evidence type="ECO:0000269" key="7">
    <source>
    </source>
</evidence>
<evidence type="ECO:0000303" key="8">
    <source>
    </source>
</evidence>
<evidence type="ECO:0000303" key="9">
    <source>
    </source>
</evidence>
<evidence type="ECO:0000305" key="10"/>
<evidence type="ECO:0000305" key="11">
    <source>
    </source>
</evidence>
<evidence type="ECO:0000305" key="12">
    <source>
    </source>
</evidence>
<gene>
    <name type="primary">St6galnac5</name>
    <name type="synonym">Siat7e</name>
</gene>
<protein>
    <recommendedName>
        <fullName>Alpha-N-acetylgalactosaminide alpha-2,6-sialyltransferase 5</fullName>
        <ecNumber evidence="5 12">2.4.99.-</ecNumber>
    </recommendedName>
    <alternativeName>
        <fullName>GD1 alpha synthase</fullName>
    </alternativeName>
    <alternativeName>
        <fullName>GalNAc alpha-2,6-sialyltransferase V</fullName>
    </alternativeName>
    <alternativeName>
        <fullName evidence="8 9">ST6GalNAc V</fullName>
        <shortName>ST6GalNAcV</shortName>
    </alternativeName>
    <alternativeName>
        <fullName>Sialyltransferase 7E</fullName>
        <shortName>SIAT7-E</shortName>
    </alternativeName>
</protein>
<feature type="chain" id="PRO_0000149281" description="Alpha-N-acetylgalactosaminide alpha-2,6-sialyltransferase 5">
    <location>
        <begin position="1"/>
        <end position="336"/>
    </location>
</feature>
<feature type="topological domain" description="Cytoplasmic" evidence="3">
    <location>
        <begin position="1"/>
        <end position="8"/>
    </location>
</feature>
<feature type="transmembrane region" description="Helical; Signal-anchor for type II membrane protein" evidence="3">
    <location>
        <begin position="9"/>
        <end position="29"/>
    </location>
</feature>
<feature type="topological domain" description="Lumenal" evidence="3">
    <location>
        <begin position="30"/>
        <end position="336"/>
    </location>
</feature>
<feature type="region of interest" description="Disordered" evidence="4">
    <location>
        <begin position="34"/>
        <end position="76"/>
    </location>
</feature>
<feature type="compositionally biased region" description="Low complexity" evidence="4">
    <location>
        <begin position="38"/>
        <end position="49"/>
    </location>
</feature>
<feature type="compositionally biased region" description="Polar residues" evidence="4">
    <location>
        <begin position="50"/>
        <end position="66"/>
    </location>
</feature>
<feature type="glycosylation site" description="N-linked (GlcNAc...) asparagine" evidence="3">
    <location>
        <position position="137"/>
    </location>
</feature>
<feature type="glycosylation site" description="N-linked (GlcNAc...) asparagine" evidence="3">
    <location>
        <position position="161"/>
    </location>
</feature>
<feature type="disulfide bond" evidence="1">
    <location>
        <begin position="96"/>
        <end position="245"/>
    </location>
</feature>
<feature type="sequence variant" description="In strain: C57BL/6J.">
    <location>
        <begin position="48"/>
        <end position="49"/>
    </location>
</feature>
<feature type="sequence variant" description="In strain: C57BL/6N and C57BL/6J.">
    <location>
        <position position="49"/>
    </location>
</feature>
<sequence length="336" mass="38430">MKTLMRHGLAVCLVLTTMCTSLLLVYSSLGSQKERPPQQQQQQQQQQQQAATATGSTQLVESSPQPRRTAPAGPRQLEGYLGVADHKPLKMHCKDCALVTSSGHLLRSQQGPHIDQTECVIRMNDAPTRGYGLDVGNRTSLRVIAHSSIQRILRNRHDLLNVSQGTVFIFWGPSSYMRRDGKGQAYNNLQLLSQVLPRLKAFMITRHRMLQFDELFKQETGKDRKISNTWLSTGWFTMTIALELCDRIDVYGMVPPDFCRDPKHPSVPYHYYEPSGPDECTMYLSHERGRKGSHHRFITEKRVFKNWARTFNIHFFQPDWKPESPAVNHAEGKPVF</sequence>
<comment type="function">
    <text evidence="2 5 6 7">Predominantly catalyzes the biosynthesis of ganglioside GD1alpha from GM1b in the brain, by transferring the sialyl group (N-acetyl-alpha-neuraminyl or NeuAc) from CMP-NeuAc to the GalNAc residue on the NeuAc-alpha-2,3-Gal-beta-1,3-GalNAc sequence of GM1b (PubMed:10521438, PubMed:10601645). GD1alpha is a critical molecule in the communication and interaction between neuronal cells and their supportive cells, particularly in brain tissues, and functions as an adhesion molecule in the process of metastasis (PubMed:9157980). Also shows activity towards sialyl Lc4Cer (N-acetyl-alpha-neuraminosyl-(2-&gt;3)-beta-D-galactosyl-(1-&gt;3)-N-acetyl-beta-D-glucosaminyl-(1-&gt;3)-beta-D-galactosyl-(1-&gt;4)-beta-D-glucosyl-(1&lt;-&gt;1')-N-acyl-sphing-4-enine) generating disialyl Lc4Cer, which can lead to the synthesis of disialyl Lewis a (Le(a)), suggested to be a cancer-associated antigen (By similarity).</text>
</comment>
<comment type="catalytic activity">
    <reaction evidence="5 12">
        <text>a ganglioside GM1b (d18:1(4E)) + CMP-N-acetyl-beta-neuraminate = a ganglioside GD1alpha (d18:1(4E)) + CMP + H(+)</text>
        <dbReference type="Rhea" id="RHEA:41968"/>
        <dbReference type="ChEBI" id="CHEBI:15378"/>
        <dbReference type="ChEBI" id="CHEBI:57812"/>
        <dbReference type="ChEBI" id="CHEBI:60377"/>
        <dbReference type="ChEBI" id="CHEBI:78568"/>
        <dbReference type="ChEBI" id="CHEBI:78569"/>
    </reaction>
    <physiologicalReaction direction="left-to-right" evidence="11 12">
        <dbReference type="Rhea" id="RHEA:41969"/>
    </physiologicalReaction>
</comment>
<comment type="catalytic activity">
    <reaction evidence="2">
        <text>N-acetyl-alpha-neuraminosyl-(2-&gt;3)-beta-D-galactosyl-(1-&gt;3)-N-acetyl-beta-D-glucosaminyl-(1-&gt;3)-beta-D-galactosyl-(1-&gt;4)-beta-D-glucosyl-(1&lt;-&gt;1')-N-acyl-sphing-4-enine + CMP-N-acetyl-beta-neuraminate = N-acetyl-alpha-neuraminosyl-(2-&gt;3)-beta-D-galactosyl-(1-&gt;3)-[N-acetyl-alpha-neuraminosyl-(2-&gt;6)]-N-acetyl-beta-D-glucosaminyl-(1-&gt;3)-beta-D-galactosyl-(1-&gt;4)-beta-D-glucosyl-(1&lt;-&gt;1')-N-acyl-sphing-4-enine + CMP + H(+)</text>
        <dbReference type="Rhea" id="RHEA:47884"/>
        <dbReference type="ChEBI" id="CHEBI:15378"/>
        <dbReference type="ChEBI" id="CHEBI:57812"/>
        <dbReference type="ChEBI" id="CHEBI:60377"/>
        <dbReference type="ChEBI" id="CHEBI:88073"/>
        <dbReference type="ChEBI" id="CHEBI:88079"/>
    </reaction>
    <physiologicalReaction direction="left-to-right" evidence="2">
        <dbReference type="Rhea" id="RHEA:47885"/>
    </physiologicalReaction>
</comment>
<comment type="pathway">
    <text evidence="11 12">Glycolipid biosynthesis.</text>
</comment>
<comment type="subcellular location">
    <subcellularLocation>
        <location>Golgi apparatus membrane</location>
        <topology>Single-pass type II membrane protein</topology>
    </subcellularLocation>
</comment>
<comment type="tissue specificity">
    <text evidence="5 6">High expression in forebrain and to a lesser extent in cerebellum. No expression in salivary gland, intestine, liver, kidney, heart, lung, thymus and spleen.</text>
</comment>
<comment type="similarity">
    <text evidence="10">Belongs to the glycosyltransferase 29 family.</text>
</comment>
<comment type="online information" name="Functional Glycomics Gateway - GTase">
    <link uri="http://www.functionalglycomics.org/glycomics/molecule/jsp/glycoEnzyme/viewGlycoEnzyme.jsp?gbpId=gt_mou_654"/>
    <text>ST6GalNAc V</text>
</comment>
<accession>Q9QYJ1</accession>
<accession>Q9R0K6</accession>
<proteinExistence type="evidence at protein level"/>
<dbReference type="EC" id="2.4.99.-" evidence="5 12"/>
<dbReference type="EMBL" id="AB028840">
    <property type="protein sequence ID" value="BAA89292.1"/>
    <property type="molecule type" value="mRNA"/>
</dbReference>
<dbReference type="EMBL" id="AB030836">
    <property type="protein sequence ID" value="BAA85747.1"/>
    <property type="molecule type" value="mRNA"/>
</dbReference>
<dbReference type="RefSeq" id="NP_036158.3">
    <property type="nucleotide sequence ID" value="NM_012028.4"/>
</dbReference>
<dbReference type="FunCoup" id="Q9QYJ1">
    <property type="interactions" value="31"/>
</dbReference>
<dbReference type="STRING" id="10090.ENSMUSP00000036227"/>
<dbReference type="SwissLipids" id="SLP:000000784"/>
<dbReference type="CAZy" id="GT29">
    <property type="family name" value="Glycosyltransferase Family 29"/>
</dbReference>
<dbReference type="GlyCosmos" id="Q9QYJ1">
    <property type="glycosylation" value="2 sites, No reported glycans"/>
</dbReference>
<dbReference type="GlyGen" id="Q9QYJ1">
    <property type="glycosylation" value="2 sites, 1 N-linked glycan (1 site)"/>
</dbReference>
<dbReference type="iPTMnet" id="Q9QYJ1"/>
<dbReference type="PhosphoSitePlus" id="Q9QYJ1"/>
<dbReference type="PaxDb" id="10090-ENSMUSP00000036227"/>
<dbReference type="ProteomicsDB" id="261231"/>
<dbReference type="DNASU" id="26938"/>
<dbReference type="GeneID" id="26938"/>
<dbReference type="KEGG" id="mmu:26938"/>
<dbReference type="AGR" id="MGI:1349471"/>
<dbReference type="CTD" id="81849"/>
<dbReference type="MGI" id="MGI:1349471">
    <property type="gene designation" value="St6galnac5"/>
</dbReference>
<dbReference type="eggNOG" id="KOG2692">
    <property type="taxonomic scope" value="Eukaryota"/>
</dbReference>
<dbReference type="InParanoid" id="Q9QYJ1"/>
<dbReference type="OrthoDB" id="10264956at2759"/>
<dbReference type="PhylomeDB" id="Q9QYJ1"/>
<dbReference type="Reactome" id="R-MMU-4085001">
    <property type="pathway name" value="Sialic acid metabolism"/>
</dbReference>
<dbReference type="Reactome" id="R-MMU-9840309">
    <property type="pathway name" value="Glycosphingolipid biosynthesis"/>
</dbReference>
<dbReference type="BioGRID-ORCS" id="26938">
    <property type="hits" value="3 hits in 80 CRISPR screens"/>
</dbReference>
<dbReference type="ChiTaRS" id="St6galnac5">
    <property type="organism name" value="mouse"/>
</dbReference>
<dbReference type="PRO" id="PR:Q9QYJ1"/>
<dbReference type="Proteomes" id="UP000000589">
    <property type="component" value="Unplaced"/>
</dbReference>
<dbReference type="RNAct" id="Q9QYJ1">
    <property type="molecule type" value="protein"/>
</dbReference>
<dbReference type="GO" id="GO:0000139">
    <property type="term" value="C:Golgi membrane"/>
    <property type="evidence" value="ECO:0007669"/>
    <property type="project" value="UniProtKB-SubCell"/>
</dbReference>
<dbReference type="GO" id="GO:0001665">
    <property type="term" value="F:alpha-N-acetylgalactosaminide alpha-2,6-sialyltransferase activity"/>
    <property type="evidence" value="ECO:0000314"/>
    <property type="project" value="BHF-UCL"/>
</dbReference>
<dbReference type="GO" id="GO:0008373">
    <property type="term" value="F:sialyltransferase activity"/>
    <property type="evidence" value="ECO:0000314"/>
    <property type="project" value="BHF-UCL"/>
</dbReference>
<dbReference type="GO" id="GO:0006688">
    <property type="term" value="P:glycosphingolipid biosynthetic process"/>
    <property type="evidence" value="ECO:0000314"/>
    <property type="project" value="BHF-UCL"/>
</dbReference>
<dbReference type="GO" id="GO:0009312">
    <property type="term" value="P:oligosaccharide biosynthetic process"/>
    <property type="evidence" value="ECO:0000314"/>
    <property type="project" value="BHF-UCL"/>
</dbReference>
<dbReference type="GO" id="GO:0006486">
    <property type="term" value="P:protein glycosylation"/>
    <property type="evidence" value="ECO:0007669"/>
    <property type="project" value="InterPro"/>
</dbReference>
<dbReference type="CDD" id="cd23976">
    <property type="entry name" value="GT29_ST6GALNAC5"/>
    <property type="match status" value="1"/>
</dbReference>
<dbReference type="FunFam" id="3.90.1480.20:FF:000011">
    <property type="entry name" value="ST6 N-acetylgalactosaminide alpha-2,6-sialyltransferase 5"/>
    <property type="match status" value="1"/>
</dbReference>
<dbReference type="Gene3D" id="3.90.1480.20">
    <property type="entry name" value="Glycosyl transferase family 29"/>
    <property type="match status" value="1"/>
</dbReference>
<dbReference type="InterPro" id="IPR001675">
    <property type="entry name" value="Glyco_trans_29"/>
</dbReference>
<dbReference type="InterPro" id="IPR038578">
    <property type="entry name" value="GT29-like_sf"/>
</dbReference>
<dbReference type="InterPro" id="IPR012163">
    <property type="entry name" value="Sialyl_trans"/>
</dbReference>
<dbReference type="PANTHER" id="PTHR45906">
    <property type="entry name" value="ALPHA-N-ACETYL-NEURAMINYL-2,3-BETA-GALACTOSYL-1, 3-N-ACETYL-GALACTOSAMINIDE ALPHA-2,6-SIALYLTRANSFERASE-LIKE"/>
    <property type="match status" value="1"/>
</dbReference>
<dbReference type="PANTHER" id="PTHR45906:SF5">
    <property type="entry name" value="ALPHA-N-ACETYLGALACTOSAMINIDE ALPHA-2,6-SIALYLTRANSFERASE 5"/>
    <property type="match status" value="1"/>
</dbReference>
<dbReference type="Pfam" id="PF00777">
    <property type="entry name" value="Glyco_transf_29"/>
    <property type="match status" value="1"/>
</dbReference>
<dbReference type="PIRSF" id="PIRSF005557">
    <property type="entry name" value="Sialyl_trans"/>
    <property type="match status" value="1"/>
</dbReference>
<name>SIA7E_MOUSE</name>
<reference key="1">
    <citation type="journal article" date="1999" name="FEBS Lett.">
        <title>A novel glycosyltransferase with a polyglutamine repeat; a new candidate for GD1alpha synthase (ST6GalNAc V).</title>
        <authorList>
            <person name="Ikehara Y."/>
            <person name="Shimizu N."/>
            <person name="Kono M."/>
            <person name="Nishihara S."/>
            <person name="Nakanishi H."/>
            <person name="Kitamura T."/>
            <person name="Narimatsu H."/>
            <person name="Tsuji S."/>
            <person name="Tatematsu M."/>
        </authorList>
    </citation>
    <scope>NUCLEOTIDE SEQUENCE [MRNA]</scope>
    <scope>FUNCTION</scope>
    <scope>CATALYTIC ACTIVITY</scope>
    <scope>TISSUE SPECIFICITY</scope>
    <source>
        <strain>C3H/HeN</strain>
        <strain>C57BL/6J</strain>
        <strain>C57BL/6N</strain>
        <tissue>Brain</tissue>
    </source>
</reference>
<reference key="2">
    <citation type="journal article" date="1999" name="J. Biol. Chem.">
        <title>Molecular cloning of brain specific GD1alpha synthase (ST6GalNAc V) containing CAG/glutamine repeats.</title>
        <authorList>
            <person name="Okajima T."/>
            <person name="Fukumoto S."/>
            <person name="Ito H."/>
            <person name="Kiso M."/>
            <person name="Hirabayashi Y."/>
            <person name="Urano T."/>
            <person name="Furukawa K."/>
        </authorList>
    </citation>
    <scope>NUCLEOTIDE SEQUENCE [MRNA]</scope>
    <scope>FUNCTION</scope>
    <scope>CATALYTIC ACTIVITY</scope>
    <scope>TISSUE SPECIFICITY</scope>
    <source>
        <strain>C57BL/6J</strain>
        <tissue>Brain</tissue>
    </source>
</reference>
<reference key="3">
    <citation type="journal article" date="1997" name="Cancer Res.">
        <title>Ganglioside GD1alpha functions in the adhesion of metastatic tumor cells to endothelial cells of the target tissue.</title>
        <authorList>
            <person name="Taki T."/>
            <person name="Ishikawa D."/>
            <person name="Ogura M."/>
            <person name="Nakajima M."/>
            <person name="Handa S."/>
        </authorList>
    </citation>
    <scope>FUNCTION</scope>
</reference>